<dbReference type="EC" id="3.4.-.-" evidence="1"/>
<dbReference type="EMBL" id="FM242711">
    <property type="protein sequence ID" value="CAS03847.1"/>
    <property type="molecule type" value="Genomic_DNA"/>
</dbReference>
<dbReference type="RefSeq" id="WP_003727551.1">
    <property type="nucleotide sequence ID" value="NC_012488.1"/>
</dbReference>
<dbReference type="KEGG" id="lmc:Lm4b_00057"/>
<dbReference type="HOGENOM" id="CLU_098969_2_2_9"/>
<dbReference type="GO" id="GO:0005886">
    <property type="term" value="C:plasma membrane"/>
    <property type="evidence" value="ECO:0007669"/>
    <property type="project" value="UniProtKB-SubCell"/>
</dbReference>
<dbReference type="GO" id="GO:0008233">
    <property type="term" value="F:peptidase activity"/>
    <property type="evidence" value="ECO:0007669"/>
    <property type="project" value="UniProtKB-UniRule"/>
</dbReference>
<dbReference type="GO" id="GO:0006508">
    <property type="term" value="P:proteolysis"/>
    <property type="evidence" value="ECO:0007669"/>
    <property type="project" value="UniProtKB-KW"/>
</dbReference>
<dbReference type="GO" id="GO:0009372">
    <property type="term" value="P:quorum sensing"/>
    <property type="evidence" value="ECO:0007669"/>
    <property type="project" value="UniProtKB-UniRule"/>
</dbReference>
<dbReference type="HAMAP" id="MF_00784">
    <property type="entry name" value="AgrB"/>
    <property type="match status" value="1"/>
</dbReference>
<dbReference type="InterPro" id="IPR006741">
    <property type="entry name" value="AgrB"/>
</dbReference>
<dbReference type="NCBIfam" id="NF002210">
    <property type="entry name" value="PRK01100.1"/>
    <property type="match status" value="1"/>
</dbReference>
<dbReference type="Pfam" id="PF04647">
    <property type="entry name" value="AgrB"/>
    <property type="match status" value="1"/>
</dbReference>
<dbReference type="SMART" id="SM00793">
    <property type="entry name" value="AgrB"/>
    <property type="match status" value="1"/>
</dbReference>
<gene>
    <name type="ordered locus">Lm4b_00057</name>
</gene>
<accession>C1KV55</accession>
<sequence>MSNFTAKVPLSERMADVLISKDRWKDDEEGYLKVKYGLEIILINVMKFALVYGIALVTGLLLQTVTVHLSYLWLRRYSFGLHATKTLNCTLISLMMFVLAPFVFQNIPSNNWIVLGTFGFILLNMFLFAPADTESLPLIGEEHRKTLKRKAMIGTLILTGIALLIPFAEMKTLIMVGSLFQVISINPLTYKLLKRRYRNYEKYE</sequence>
<feature type="chain" id="PRO_1000212922" description="Putative AgrB-like protein">
    <location>
        <begin position="1"/>
        <end position="204"/>
    </location>
</feature>
<feature type="transmembrane region" description="Helical" evidence="1">
    <location>
        <begin position="52"/>
        <end position="74"/>
    </location>
</feature>
<feature type="transmembrane region" description="Helical" evidence="1">
    <location>
        <begin position="87"/>
        <end position="107"/>
    </location>
</feature>
<feature type="transmembrane region" description="Helical" evidence="1">
    <location>
        <begin position="111"/>
        <end position="131"/>
    </location>
</feature>
<feature type="transmembrane region" description="Helical" evidence="1">
    <location>
        <begin position="156"/>
        <end position="176"/>
    </location>
</feature>
<proteinExistence type="inferred from homology"/>
<organism>
    <name type="scientific">Listeria monocytogenes serotype 4b (strain CLIP80459)</name>
    <dbReference type="NCBI Taxonomy" id="568819"/>
    <lineage>
        <taxon>Bacteria</taxon>
        <taxon>Bacillati</taxon>
        <taxon>Bacillota</taxon>
        <taxon>Bacilli</taxon>
        <taxon>Bacillales</taxon>
        <taxon>Listeriaceae</taxon>
        <taxon>Listeria</taxon>
    </lineage>
</organism>
<reference key="1">
    <citation type="journal article" date="2012" name="BMC Genomics">
        <title>Comparative genomics and transcriptomics of lineages I, II, and III strains of Listeria monocytogenes.</title>
        <authorList>
            <person name="Hain T."/>
            <person name="Ghai R."/>
            <person name="Billion A."/>
            <person name="Kuenne C.T."/>
            <person name="Steinweg C."/>
            <person name="Izar B."/>
            <person name="Mohamed W."/>
            <person name="Mraheil M."/>
            <person name="Domann E."/>
            <person name="Schaffrath S."/>
            <person name="Karst U."/>
            <person name="Goesmann A."/>
            <person name="Oehm S."/>
            <person name="Puhler A."/>
            <person name="Merkl R."/>
            <person name="Vorwerk S."/>
            <person name="Glaser P."/>
            <person name="Garrido P."/>
            <person name="Rusniok C."/>
            <person name="Buchrieser C."/>
            <person name="Goebel W."/>
            <person name="Chakraborty T."/>
        </authorList>
    </citation>
    <scope>NUCLEOTIDE SEQUENCE [LARGE SCALE GENOMIC DNA]</scope>
    <source>
        <strain>CLIP80459</strain>
    </source>
</reference>
<keyword id="KW-1003">Cell membrane</keyword>
<keyword id="KW-0378">Hydrolase</keyword>
<keyword id="KW-0472">Membrane</keyword>
<keyword id="KW-0645">Protease</keyword>
<keyword id="KW-0673">Quorum sensing</keyword>
<keyword id="KW-0812">Transmembrane</keyword>
<keyword id="KW-1133">Transmembrane helix</keyword>
<name>AGRB_LISMC</name>
<evidence type="ECO:0000255" key="1">
    <source>
        <dbReference type="HAMAP-Rule" id="MF_00784"/>
    </source>
</evidence>
<comment type="function">
    <text evidence="1">May be involved in the proteolytic processing of a quorum sensing system signal molecule precursor.</text>
</comment>
<comment type="subcellular location">
    <subcellularLocation>
        <location evidence="1">Cell membrane</location>
        <topology evidence="1">Multi-pass membrane protein</topology>
    </subcellularLocation>
</comment>
<comment type="similarity">
    <text evidence="1">Belongs to the AgrB family.</text>
</comment>
<protein>
    <recommendedName>
        <fullName evidence="1">Putative AgrB-like protein</fullName>
        <ecNumber evidence="1">3.4.-.-</ecNumber>
    </recommendedName>
</protein>